<dbReference type="EC" id="4.1.99.12" evidence="1"/>
<dbReference type="EMBL" id="AE017220">
    <property type="protein sequence ID" value="AAX67047.1"/>
    <property type="molecule type" value="Genomic_DNA"/>
</dbReference>
<dbReference type="RefSeq" id="WP_001076978.1">
    <property type="nucleotide sequence ID" value="NC_006905.1"/>
</dbReference>
<dbReference type="SMR" id="Q57JR5"/>
<dbReference type="KEGG" id="sec:SCH_3141"/>
<dbReference type="HOGENOM" id="CLU_020273_3_0_6"/>
<dbReference type="UniPathway" id="UPA00275">
    <property type="reaction ID" value="UER00399"/>
</dbReference>
<dbReference type="Proteomes" id="UP000000538">
    <property type="component" value="Chromosome"/>
</dbReference>
<dbReference type="GO" id="GO:0005829">
    <property type="term" value="C:cytosol"/>
    <property type="evidence" value="ECO:0007669"/>
    <property type="project" value="TreeGrafter"/>
</dbReference>
<dbReference type="GO" id="GO:0008686">
    <property type="term" value="F:3,4-dihydroxy-2-butanone-4-phosphate synthase activity"/>
    <property type="evidence" value="ECO:0007669"/>
    <property type="project" value="UniProtKB-UniRule"/>
</dbReference>
<dbReference type="GO" id="GO:0000287">
    <property type="term" value="F:magnesium ion binding"/>
    <property type="evidence" value="ECO:0007669"/>
    <property type="project" value="UniProtKB-UniRule"/>
</dbReference>
<dbReference type="GO" id="GO:0030145">
    <property type="term" value="F:manganese ion binding"/>
    <property type="evidence" value="ECO:0007669"/>
    <property type="project" value="UniProtKB-UniRule"/>
</dbReference>
<dbReference type="GO" id="GO:0009231">
    <property type="term" value="P:riboflavin biosynthetic process"/>
    <property type="evidence" value="ECO:0007669"/>
    <property type="project" value="UniProtKB-UniRule"/>
</dbReference>
<dbReference type="FunFam" id="3.90.870.10:FF:000002">
    <property type="entry name" value="3,4-dihydroxy-2-butanone 4-phosphate synthase"/>
    <property type="match status" value="1"/>
</dbReference>
<dbReference type="Gene3D" id="3.90.870.10">
    <property type="entry name" value="DHBP synthase"/>
    <property type="match status" value="1"/>
</dbReference>
<dbReference type="HAMAP" id="MF_00180">
    <property type="entry name" value="RibB"/>
    <property type="match status" value="1"/>
</dbReference>
<dbReference type="InterPro" id="IPR017945">
    <property type="entry name" value="DHBP_synth_RibB-like_a/b_dom"/>
</dbReference>
<dbReference type="InterPro" id="IPR000422">
    <property type="entry name" value="DHBP_synthase_RibB"/>
</dbReference>
<dbReference type="NCBIfam" id="TIGR00506">
    <property type="entry name" value="ribB"/>
    <property type="match status" value="1"/>
</dbReference>
<dbReference type="PANTHER" id="PTHR21327:SF38">
    <property type="entry name" value="3,4-DIHYDROXY-2-BUTANONE 4-PHOSPHATE SYNTHASE"/>
    <property type="match status" value="1"/>
</dbReference>
<dbReference type="PANTHER" id="PTHR21327">
    <property type="entry name" value="GTP CYCLOHYDROLASE II-RELATED"/>
    <property type="match status" value="1"/>
</dbReference>
<dbReference type="Pfam" id="PF00926">
    <property type="entry name" value="DHBP_synthase"/>
    <property type="match status" value="1"/>
</dbReference>
<dbReference type="SUPFAM" id="SSF55821">
    <property type="entry name" value="YrdC/RibB"/>
    <property type="match status" value="1"/>
</dbReference>
<keyword id="KW-0456">Lyase</keyword>
<keyword id="KW-0460">Magnesium</keyword>
<keyword id="KW-0464">Manganese</keyword>
<keyword id="KW-0479">Metal-binding</keyword>
<keyword id="KW-0686">Riboflavin biosynthesis</keyword>
<sequence length="217" mass="23310">MNQTLLSSFGTPFERVELALDALREGRGVMVLDDEDRENEGDMIFPAETMTVEQMALTIRHGSGIVCLCITEDRRKQLDLPMMVENNTSAYGTGFTVTIEAAEGVTTGVSAADRVTTVRAAIKDGAKPSDLNRPGHVFPLRAQAGGVLTRGGHTEATIDLMTLAGFKPAGVLCELTNDDGTMARAPECIAFAGQHNMAVVTIEDLVAYRQAHERKAS</sequence>
<feature type="chain" id="PRO_1000040623" description="3,4-dihydroxy-2-butanone 4-phosphate synthase">
    <location>
        <begin position="1"/>
        <end position="217"/>
    </location>
</feature>
<feature type="binding site" evidence="1">
    <location>
        <begin position="37"/>
        <end position="38"/>
    </location>
    <ligand>
        <name>D-ribulose 5-phosphate</name>
        <dbReference type="ChEBI" id="CHEBI:58121"/>
    </ligand>
</feature>
<feature type="binding site" evidence="1">
    <location>
        <position position="38"/>
    </location>
    <ligand>
        <name>Mg(2+)</name>
        <dbReference type="ChEBI" id="CHEBI:18420"/>
        <label>1</label>
    </ligand>
</feature>
<feature type="binding site" evidence="1">
    <location>
        <position position="38"/>
    </location>
    <ligand>
        <name>Mg(2+)</name>
        <dbReference type="ChEBI" id="CHEBI:18420"/>
        <label>2</label>
    </ligand>
</feature>
<feature type="binding site" evidence="1">
    <location>
        <position position="42"/>
    </location>
    <ligand>
        <name>D-ribulose 5-phosphate</name>
        <dbReference type="ChEBI" id="CHEBI:58121"/>
    </ligand>
</feature>
<feature type="binding site" evidence="1">
    <location>
        <begin position="150"/>
        <end position="154"/>
    </location>
    <ligand>
        <name>D-ribulose 5-phosphate</name>
        <dbReference type="ChEBI" id="CHEBI:58121"/>
    </ligand>
</feature>
<feature type="binding site" evidence="1">
    <location>
        <position position="153"/>
    </location>
    <ligand>
        <name>Mg(2+)</name>
        <dbReference type="ChEBI" id="CHEBI:18420"/>
        <label>2</label>
    </ligand>
</feature>
<feature type="binding site" evidence="1">
    <location>
        <position position="174"/>
    </location>
    <ligand>
        <name>D-ribulose 5-phosphate</name>
        <dbReference type="ChEBI" id="CHEBI:58121"/>
    </ligand>
</feature>
<feature type="site" description="Essential for catalytic activity" evidence="1">
    <location>
        <position position="136"/>
    </location>
</feature>
<feature type="site" description="Essential for catalytic activity" evidence="1">
    <location>
        <position position="174"/>
    </location>
</feature>
<reference key="1">
    <citation type="journal article" date="2005" name="Nucleic Acids Res.">
        <title>The genome sequence of Salmonella enterica serovar Choleraesuis, a highly invasive and resistant zoonotic pathogen.</title>
        <authorList>
            <person name="Chiu C.-H."/>
            <person name="Tang P."/>
            <person name="Chu C."/>
            <person name="Hu S."/>
            <person name="Bao Q."/>
            <person name="Yu J."/>
            <person name="Chou Y.-Y."/>
            <person name="Wang H.-S."/>
            <person name="Lee Y.-S."/>
        </authorList>
    </citation>
    <scope>NUCLEOTIDE SEQUENCE [LARGE SCALE GENOMIC DNA]</scope>
    <source>
        <strain>SC-B67</strain>
    </source>
</reference>
<protein>
    <recommendedName>
        <fullName evidence="1">3,4-dihydroxy-2-butanone 4-phosphate synthase</fullName>
        <shortName evidence="1">DHBP synthase</shortName>
        <ecNumber evidence="1">4.1.99.12</ecNumber>
    </recommendedName>
</protein>
<gene>
    <name evidence="1" type="primary">ribB</name>
    <name type="ordered locus">SCH_3141</name>
</gene>
<comment type="function">
    <text evidence="1">Catalyzes the conversion of D-ribulose 5-phosphate to formate and 3,4-dihydroxy-2-butanone 4-phosphate.</text>
</comment>
<comment type="catalytic activity">
    <reaction evidence="1">
        <text>D-ribulose 5-phosphate = (2S)-2-hydroxy-3-oxobutyl phosphate + formate + H(+)</text>
        <dbReference type="Rhea" id="RHEA:18457"/>
        <dbReference type="ChEBI" id="CHEBI:15378"/>
        <dbReference type="ChEBI" id="CHEBI:15740"/>
        <dbReference type="ChEBI" id="CHEBI:58121"/>
        <dbReference type="ChEBI" id="CHEBI:58830"/>
        <dbReference type="EC" id="4.1.99.12"/>
    </reaction>
</comment>
<comment type="cofactor">
    <cofactor evidence="1">
        <name>Mg(2+)</name>
        <dbReference type="ChEBI" id="CHEBI:18420"/>
    </cofactor>
    <cofactor evidence="1">
        <name>Mn(2+)</name>
        <dbReference type="ChEBI" id="CHEBI:29035"/>
    </cofactor>
    <text evidence="1">Binds 2 divalent metal cations per subunit. Magnesium or manganese.</text>
</comment>
<comment type="pathway">
    <text evidence="1">Cofactor biosynthesis; riboflavin biosynthesis; 2-hydroxy-3-oxobutyl phosphate from D-ribulose 5-phosphate: step 1/1.</text>
</comment>
<comment type="subunit">
    <text evidence="1">Homodimer.</text>
</comment>
<comment type="similarity">
    <text evidence="1">Belongs to the DHBP synthase family.</text>
</comment>
<organism>
    <name type="scientific">Salmonella choleraesuis (strain SC-B67)</name>
    <dbReference type="NCBI Taxonomy" id="321314"/>
    <lineage>
        <taxon>Bacteria</taxon>
        <taxon>Pseudomonadati</taxon>
        <taxon>Pseudomonadota</taxon>
        <taxon>Gammaproteobacteria</taxon>
        <taxon>Enterobacterales</taxon>
        <taxon>Enterobacteriaceae</taxon>
        <taxon>Salmonella</taxon>
    </lineage>
</organism>
<proteinExistence type="inferred from homology"/>
<evidence type="ECO:0000255" key="1">
    <source>
        <dbReference type="HAMAP-Rule" id="MF_00180"/>
    </source>
</evidence>
<name>RIBB_SALCH</name>
<accession>Q57JR5</accession>